<evidence type="ECO:0000255" key="1">
    <source>
        <dbReference type="HAMAP-Rule" id="MF_01808"/>
    </source>
</evidence>
<evidence type="ECO:0000255" key="2">
    <source>
        <dbReference type="PROSITE-ProRule" id="PRU01246"/>
    </source>
</evidence>
<evidence type="ECO:0000255" key="3">
    <source>
        <dbReference type="PROSITE-ProRule" id="PRU01248"/>
    </source>
</evidence>
<evidence type="ECO:0000305" key="4"/>
<keyword id="KW-0131">Cell cycle</keyword>
<keyword id="KW-0132">Cell division</keyword>
<keyword id="KW-0159">Chromosome partition</keyword>
<keyword id="KW-0963">Cytoplasm</keyword>
<keyword id="KW-0229">DNA integration</keyword>
<keyword id="KW-0233">DNA recombination</keyword>
<keyword id="KW-0238">DNA-binding</keyword>
<keyword id="KW-1185">Reference proteome</keyword>
<accession>Q8D1K0</accession>
<accession>Q0WAG7</accession>
<accession>Q8ZAF9</accession>
<proteinExistence type="inferred from homology"/>
<sequence>MTEFSASLAPQVEAFLRYLSIERQLSPLTVTSYRRQLSALMEIGEQMGLAHWQTLDAAQVRSLVSRSKRAGLHASSLALRLSALRSFLNWLVSQGVLPANPAKGVSTPRSGRHLPKNIDVDEVNKLLSIDLNDPLAVRDRAMLEVMYGAGLRLSELVGMNCKHVDLASGDVWVMGKGSKERKVPLGKTAVTWLQHWLALRELFEPQDDAIFLANTGKRISARNVQKRFAEWGVKQGVSSHIHPHKLRHSFATHMLESSGDLRAVQELLGHANLTTTQIYTHLDFQHLATVYDAAHPRAKRGKS</sequence>
<dbReference type="EMBL" id="AL590842">
    <property type="protein sequence ID" value="CAL22430.1"/>
    <property type="molecule type" value="Genomic_DNA"/>
</dbReference>
<dbReference type="EMBL" id="AE009952">
    <property type="protein sequence ID" value="AAM83976.1"/>
    <property type="status" value="ALT_INIT"/>
    <property type="molecule type" value="Genomic_DNA"/>
</dbReference>
<dbReference type="EMBL" id="AE017042">
    <property type="protein sequence ID" value="AAS63372.1"/>
    <property type="molecule type" value="Genomic_DNA"/>
</dbReference>
<dbReference type="PIR" id="AC0468">
    <property type="entry name" value="AC0468"/>
</dbReference>
<dbReference type="RefSeq" id="WP_002211473.1">
    <property type="nucleotide sequence ID" value="NZ_WUCM01000033.1"/>
</dbReference>
<dbReference type="RefSeq" id="YP_002348721.1">
    <property type="nucleotide sequence ID" value="NC_003143.1"/>
</dbReference>
<dbReference type="SMR" id="Q8D1K0"/>
<dbReference type="IntAct" id="Q8D1K0">
    <property type="interactions" value="2"/>
</dbReference>
<dbReference type="STRING" id="214092.YPO3843"/>
<dbReference type="PaxDb" id="214092-YPO3843"/>
<dbReference type="EnsemblBacteria" id="AAS63372">
    <property type="protein sequence ID" value="AAS63372"/>
    <property type="gene ID" value="YP_3204"/>
</dbReference>
<dbReference type="GeneID" id="57974866"/>
<dbReference type="KEGG" id="ype:YPO3843"/>
<dbReference type="KEGG" id="ypk:y0387"/>
<dbReference type="KEGG" id="ypm:YP_3204"/>
<dbReference type="PATRIC" id="fig|214092.21.peg.4366"/>
<dbReference type="eggNOG" id="COG4973">
    <property type="taxonomic scope" value="Bacteria"/>
</dbReference>
<dbReference type="HOGENOM" id="CLU_027562_9_0_6"/>
<dbReference type="OMA" id="AMMELMY"/>
<dbReference type="OrthoDB" id="9801717at2"/>
<dbReference type="Proteomes" id="UP000000815">
    <property type="component" value="Chromosome"/>
</dbReference>
<dbReference type="Proteomes" id="UP000001019">
    <property type="component" value="Chromosome"/>
</dbReference>
<dbReference type="Proteomes" id="UP000002490">
    <property type="component" value="Chromosome"/>
</dbReference>
<dbReference type="GO" id="GO:0005737">
    <property type="term" value="C:cytoplasm"/>
    <property type="evidence" value="ECO:0007669"/>
    <property type="project" value="UniProtKB-SubCell"/>
</dbReference>
<dbReference type="GO" id="GO:0048476">
    <property type="term" value="C:Holliday junction resolvase complex"/>
    <property type="evidence" value="ECO:0000318"/>
    <property type="project" value="GO_Central"/>
</dbReference>
<dbReference type="GO" id="GO:0003677">
    <property type="term" value="F:DNA binding"/>
    <property type="evidence" value="ECO:0000318"/>
    <property type="project" value="GO_Central"/>
</dbReference>
<dbReference type="GO" id="GO:0009037">
    <property type="term" value="F:tyrosine-based site-specific recombinase activity"/>
    <property type="evidence" value="ECO:0000318"/>
    <property type="project" value="GO_Central"/>
</dbReference>
<dbReference type="GO" id="GO:0051301">
    <property type="term" value="P:cell division"/>
    <property type="evidence" value="ECO:0007669"/>
    <property type="project" value="UniProtKB-KW"/>
</dbReference>
<dbReference type="GO" id="GO:0007059">
    <property type="term" value="P:chromosome segregation"/>
    <property type="evidence" value="ECO:0000318"/>
    <property type="project" value="GO_Central"/>
</dbReference>
<dbReference type="GO" id="GO:0006310">
    <property type="term" value="P:DNA recombination"/>
    <property type="evidence" value="ECO:0000318"/>
    <property type="project" value="GO_Central"/>
</dbReference>
<dbReference type="GO" id="GO:0006313">
    <property type="term" value="P:DNA transposition"/>
    <property type="evidence" value="ECO:0007669"/>
    <property type="project" value="UniProtKB-UniRule"/>
</dbReference>
<dbReference type="GO" id="GO:0071139">
    <property type="term" value="P:resolution of DNA recombination intermediates"/>
    <property type="evidence" value="ECO:0000318"/>
    <property type="project" value="GO_Central"/>
</dbReference>
<dbReference type="CDD" id="cd00798">
    <property type="entry name" value="INT_XerDC_C"/>
    <property type="match status" value="1"/>
</dbReference>
<dbReference type="FunFam" id="1.10.443.10:FF:000002">
    <property type="entry name" value="Tyrosine recombinase XerC"/>
    <property type="match status" value="1"/>
</dbReference>
<dbReference type="Gene3D" id="1.10.150.130">
    <property type="match status" value="1"/>
</dbReference>
<dbReference type="Gene3D" id="1.10.443.10">
    <property type="entry name" value="Intergrase catalytic core"/>
    <property type="match status" value="1"/>
</dbReference>
<dbReference type="HAMAP" id="MF_01808">
    <property type="entry name" value="Recomb_XerC_XerD"/>
    <property type="match status" value="1"/>
</dbReference>
<dbReference type="InterPro" id="IPR044068">
    <property type="entry name" value="CB"/>
</dbReference>
<dbReference type="InterPro" id="IPR011010">
    <property type="entry name" value="DNA_brk_join_enz"/>
</dbReference>
<dbReference type="InterPro" id="IPR013762">
    <property type="entry name" value="Integrase-like_cat_sf"/>
</dbReference>
<dbReference type="InterPro" id="IPR002104">
    <property type="entry name" value="Integrase_catalytic"/>
</dbReference>
<dbReference type="InterPro" id="IPR010998">
    <property type="entry name" value="Integrase_recombinase_N"/>
</dbReference>
<dbReference type="InterPro" id="IPR004107">
    <property type="entry name" value="Integrase_SAM-like_N"/>
</dbReference>
<dbReference type="InterPro" id="IPR011931">
    <property type="entry name" value="Recomb_XerC"/>
</dbReference>
<dbReference type="InterPro" id="IPR023009">
    <property type="entry name" value="Tyrosine_recombinase_XerC/XerD"/>
</dbReference>
<dbReference type="InterPro" id="IPR050090">
    <property type="entry name" value="Tyrosine_recombinase_XerCD"/>
</dbReference>
<dbReference type="NCBIfam" id="NF001399">
    <property type="entry name" value="PRK00283.1"/>
    <property type="match status" value="1"/>
</dbReference>
<dbReference type="NCBIfam" id="TIGR02224">
    <property type="entry name" value="recomb_XerC"/>
    <property type="match status" value="1"/>
</dbReference>
<dbReference type="PANTHER" id="PTHR30349">
    <property type="entry name" value="PHAGE INTEGRASE-RELATED"/>
    <property type="match status" value="1"/>
</dbReference>
<dbReference type="PANTHER" id="PTHR30349:SF81">
    <property type="entry name" value="TYROSINE RECOMBINASE XERC"/>
    <property type="match status" value="1"/>
</dbReference>
<dbReference type="Pfam" id="PF02899">
    <property type="entry name" value="Phage_int_SAM_1"/>
    <property type="match status" value="1"/>
</dbReference>
<dbReference type="Pfam" id="PF00589">
    <property type="entry name" value="Phage_integrase"/>
    <property type="match status" value="1"/>
</dbReference>
<dbReference type="SUPFAM" id="SSF56349">
    <property type="entry name" value="DNA breaking-rejoining enzymes"/>
    <property type="match status" value="1"/>
</dbReference>
<dbReference type="SUPFAM" id="SSF47823">
    <property type="entry name" value="lambda integrase-like, N-terminal domain"/>
    <property type="match status" value="1"/>
</dbReference>
<dbReference type="PROSITE" id="PS51900">
    <property type="entry name" value="CB"/>
    <property type="match status" value="1"/>
</dbReference>
<dbReference type="PROSITE" id="PS51898">
    <property type="entry name" value="TYR_RECOMBINASE"/>
    <property type="match status" value="1"/>
</dbReference>
<feature type="chain" id="PRO_0000095351" description="Tyrosine recombinase XerC">
    <location>
        <begin position="1"/>
        <end position="303"/>
    </location>
</feature>
<feature type="domain" description="Core-binding (CB)" evidence="3">
    <location>
        <begin position="6"/>
        <end position="92"/>
    </location>
</feature>
<feature type="domain" description="Tyr recombinase" evidence="2">
    <location>
        <begin position="113"/>
        <end position="292"/>
    </location>
</feature>
<feature type="active site" evidence="1">
    <location>
        <position position="152"/>
    </location>
</feature>
<feature type="active site" evidence="1">
    <location>
        <position position="176"/>
    </location>
</feature>
<feature type="active site" evidence="1">
    <location>
        <position position="244"/>
    </location>
</feature>
<feature type="active site" evidence="1">
    <location>
        <position position="247"/>
    </location>
</feature>
<feature type="active site" evidence="1">
    <location>
        <position position="270"/>
    </location>
</feature>
<feature type="active site" description="O-(3'-phospho-DNA)-tyrosine intermediate" evidence="1">
    <location>
        <position position="279"/>
    </location>
</feature>
<organism>
    <name type="scientific">Yersinia pestis</name>
    <dbReference type="NCBI Taxonomy" id="632"/>
    <lineage>
        <taxon>Bacteria</taxon>
        <taxon>Pseudomonadati</taxon>
        <taxon>Pseudomonadota</taxon>
        <taxon>Gammaproteobacteria</taxon>
        <taxon>Enterobacterales</taxon>
        <taxon>Yersiniaceae</taxon>
        <taxon>Yersinia</taxon>
    </lineage>
</organism>
<comment type="function">
    <text evidence="1">Site-specific tyrosine recombinase, which acts by catalyzing the cutting and rejoining of the recombining DNA molecules. Binds cooperatively to specific DNA consensus sequences that are separated from XerD binding sites by a short central region, forming the heterotetrameric XerC-XerD complex that recombines DNA substrates. The complex is essential to convert dimers of the bacterial chromosome into monomers to permit their segregation at cell division. It also contributes to the segregational stability of plasmids. In the complex XerC specifically exchanges the top DNA strands.</text>
</comment>
<comment type="activity regulation">
    <text evidence="1">FtsK may regulate the catalytic switch between XerC and XerD in the heterotetrameric complex during the two steps of the recombination process.</text>
</comment>
<comment type="subunit">
    <text evidence="1">Forms a cyclic heterotetrameric complex composed of two molecules of XerC and two molecules of XerD, in which XerC interacts with XerD via its C-terminal region, XerD interacts with XerC via its C-terminal region and so on.</text>
</comment>
<comment type="subcellular location">
    <subcellularLocation>
        <location evidence="1">Cytoplasm</location>
    </subcellularLocation>
</comment>
<comment type="similarity">
    <text evidence="1">Belongs to the 'phage' integrase family. XerC subfamily.</text>
</comment>
<comment type="sequence caution" evidence="4">
    <conflict type="erroneous initiation">
        <sequence resource="EMBL-CDS" id="AAM83976"/>
    </conflict>
</comment>
<protein>
    <recommendedName>
        <fullName evidence="1">Tyrosine recombinase XerC</fullName>
    </recommendedName>
</protein>
<name>XERC_YERPE</name>
<reference key="1">
    <citation type="journal article" date="2001" name="Nature">
        <title>Genome sequence of Yersinia pestis, the causative agent of plague.</title>
        <authorList>
            <person name="Parkhill J."/>
            <person name="Wren B.W."/>
            <person name="Thomson N.R."/>
            <person name="Titball R.W."/>
            <person name="Holden M.T.G."/>
            <person name="Prentice M.B."/>
            <person name="Sebaihia M."/>
            <person name="James K.D."/>
            <person name="Churcher C.M."/>
            <person name="Mungall K.L."/>
            <person name="Baker S."/>
            <person name="Basham D."/>
            <person name="Bentley S.D."/>
            <person name="Brooks K."/>
            <person name="Cerdeno-Tarraga A.-M."/>
            <person name="Chillingworth T."/>
            <person name="Cronin A."/>
            <person name="Davies R.M."/>
            <person name="Davis P."/>
            <person name="Dougan G."/>
            <person name="Feltwell T."/>
            <person name="Hamlin N."/>
            <person name="Holroyd S."/>
            <person name="Jagels K."/>
            <person name="Karlyshev A.V."/>
            <person name="Leather S."/>
            <person name="Moule S."/>
            <person name="Oyston P.C.F."/>
            <person name="Quail M.A."/>
            <person name="Rutherford K.M."/>
            <person name="Simmonds M."/>
            <person name="Skelton J."/>
            <person name="Stevens K."/>
            <person name="Whitehead S."/>
            <person name="Barrell B.G."/>
        </authorList>
    </citation>
    <scope>NUCLEOTIDE SEQUENCE [LARGE SCALE GENOMIC DNA]</scope>
    <source>
        <strain>CO-92 / Biovar Orientalis</strain>
    </source>
</reference>
<reference key="2">
    <citation type="journal article" date="2002" name="J. Bacteriol.">
        <title>Genome sequence of Yersinia pestis KIM.</title>
        <authorList>
            <person name="Deng W."/>
            <person name="Burland V."/>
            <person name="Plunkett G. III"/>
            <person name="Boutin A."/>
            <person name="Mayhew G.F."/>
            <person name="Liss P."/>
            <person name="Perna N.T."/>
            <person name="Rose D.J."/>
            <person name="Mau B."/>
            <person name="Zhou S."/>
            <person name="Schwartz D.C."/>
            <person name="Fetherston J.D."/>
            <person name="Lindler L.E."/>
            <person name="Brubaker R.R."/>
            <person name="Plano G.V."/>
            <person name="Straley S.C."/>
            <person name="McDonough K.A."/>
            <person name="Nilles M.L."/>
            <person name="Matson J.S."/>
            <person name="Blattner F.R."/>
            <person name="Perry R.D."/>
        </authorList>
    </citation>
    <scope>NUCLEOTIDE SEQUENCE [LARGE SCALE GENOMIC DNA]</scope>
    <source>
        <strain>KIM10+ / Biovar Mediaevalis</strain>
    </source>
</reference>
<reference key="3">
    <citation type="journal article" date="2004" name="DNA Res.">
        <title>Complete genome sequence of Yersinia pestis strain 91001, an isolate avirulent to humans.</title>
        <authorList>
            <person name="Song Y."/>
            <person name="Tong Z."/>
            <person name="Wang J."/>
            <person name="Wang L."/>
            <person name="Guo Z."/>
            <person name="Han Y."/>
            <person name="Zhang J."/>
            <person name="Pei D."/>
            <person name="Zhou D."/>
            <person name="Qin H."/>
            <person name="Pang X."/>
            <person name="Han Y."/>
            <person name="Zhai J."/>
            <person name="Li M."/>
            <person name="Cui B."/>
            <person name="Qi Z."/>
            <person name="Jin L."/>
            <person name="Dai R."/>
            <person name="Chen F."/>
            <person name="Li S."/>
            <person name="Ye C."/>
            <person name="Du Z."/>
            <person name="Lin W."/>
            <person name="Wang J."/>
            <person name="Yu J."/>
            <person name="Yang H."/>
            <person name="Wang J."/>
            <person name="Huang P."/>
            <person name="Yang R."/>
        </authorList>
    </citation>
    <scope>NUCLEOTIDE SEQUENCE [LARGE SCALE GENOMIC DNA]</scope>
    <source>
        <strain>91001 / Biovar Mediaevalis</strain>
    </source>
</reference>
<gene>
    <name evidence="1" type="primary">xerC</name>
    <name type="ordered locus">YPO3843</name>
    <name type="ordered locus">y0387</name>
    <name type="ordered locus">YP_3204</name>
</gene>